<dbReference type="EMBL" id="CP000250">
    <property type="protein sequence ID" value="ABD07022.1"/>
    <property type="molecule type" value="Genomic_DNA"/>
</dbReference>
<dbReference type="RefSeq" id="WP_011441207.1">
    <property type="nucleotide sequence ID" value="NC_007778.1"/>
</dbReference>
<dbReference type="SMR" id="Q2IXN8"/>
<dbReference type="STRING" id="316058.RPB_2317"/>
<dbReference type="KEGG" id="rpb:RPB_2317"/>
<dbReference type="eggNOG" id="COG0099">
    <property type="taxonomic scope" value="Bacteria"/>
</dbReference>
<dbReference type="HOGENOM" id="CLU_103849_1_2_5"/>
<dbReference type="OrthoDB" id="9803610at2"/>
<dbReference type="Proteomes" id="UP000008809">
    <property type="component" value="Chromosome"/>
</dbReference>
<dbReference type="GO" id="GO:0005829">
    <property type="term" value="C:cytosol"/>
    <property type="evidence" value="ECO:0007669"/>
    <property type="project" value="TreeGrafter"/>
</dbReference>
<dbReference type="GO" id="GO:0015935">
    <property type="term" value="C:small ribosomal subunit"/>
    <property type="evidence" value="ECO:0007669"/>
    <property type="project" value="TreeGrafter"/>
</dbReference>
<dbReference type="GO" id="GO:0019843">
    <property type="term" value="F:rRNA binding"/>
    <property type="evidence" value="ECO:0007669"/>
    <property type="project" value="UniProtKB-UniRule"/>
</dbReference>
<dbReference type="GO" id="GO:0003735">
    <property type="term" value="F:structural constituent of ribosome"/>
    <property type="evidence" value="ECO:0007669"/>
    <property type="project" value="InterPro"/>
</dbReference>
<dbReference type="GO" id="GO:0000049">
    <property type="term" value="F:tRNA binding"/>
    <property type="evidence" value="ECO:0007669"/>
    <property type="project" value="UniProtKB-UniRule"/>
</dbReference>
<dbReference type="GO" id="GO:0006412">
    <property type="term" value="P:translation"/>
    <property type="evidence" value="ECO:0007669"/>
    <property type="project" value="UniProtKB-UniRule"/>
</dbReference>
<dbReference type="FunFam" id="1.10.8.50:FF:000001">
    <property type="entry name" value="30S ribosomal protein S13"/>
    <property type="match status" value="1"/>
</dbReference>
<dbReference type="FunFam" id="4.10.910.10:FF:000001">
    <property type="entry name" value="30S ribosomal protein S13"/>
    <property type="match status" value="1"/>
</dbReference>
<dbReference type="Gene3D" id="1.10.8.50">
    <property type="match status" value="1"/>
</dbReference>
<dbReference type="Gene3D" id="4.10.910.10">
    <property type="entry name" value="30s ribosomal protein s13, domain 2"/>
    <property type="match status" value="1"/>
</dbReference>
<dbReference type="HAMAP" id="MF_01315">
    <property type="entry name" value="Ribosomal_uS13"/>
    <property type="match status" value="1"/>
</dbReference>
<dbReference type="InterPro" id="IPR027437">
    <property type="entry name" value="Rbsml_uS13_C"/>
</dbReference>
<dbReference type="InterPro" id="IPR001892">
    <property type="entry name" value="Ribosomal_uS13"/>
</dbReference>
<dbReference type="InterPro" id="IPR010979">
    <property type="entry name" value="Ribosomal_uS13-like_H2TH"/>
</dbReference>
<dbReference type="InterPro" id="IPR019980">
    <property type="entry name" value="Ribosomal_uS13_bac-type"/>
</dbReference>
<dbReference type="InterPro" id="IPR018269">
    <property type="entry name" value="Ribosomal_uS13_CS"/>
</dbReference>
<dbReference type="NCBIfam" id="TIGR03631">
    <property type="entry name" value="uS13_bact"/>
    <property type="match status" value="1"/>
</dbReference>
<dbReference type="PANTHER" id="PTHR10871">
    <property type="entry name" value="30S RIBOSOMAL PROTEIN S13/40S RIBOSOMAL PROTEIN S18"/>
    <property type="match status" value="1"/>
</dbReference>
<dbReference type="PANTHER" id="PTHR10871:SF1">
    <property type="entry name" value="SMALL RIBOSOMAL SUBUNIT PROTEIN US13M"/>
    <property type="match status" value="1"/>
</dbReference>
<dbReference type="Pfam" id="PF00416">
    <property type="entry name" value="Ribosomal_S13"/>
    <property type="match status" value="1"/>
</dbReference>
<dbReference type="PIRSF" id="PIRSF002134">
    <property type="entry name" value="Ribosomal_S13"/>
    <property type="match status" value="1"/>
</dbReference>
<dbReference type="SUPFAM" id="SSF46946">
    <property type="entry name" value="S13-like H2TH domain"/>
    <property type="match status" value="1"/>
</dbReference>
<dbReference type="PROSITE" id="PS00646">
    <property type="entry name" value="RIBOSOMAL_S13_1"/>
    <property type="match status" value="1"/>
</dbReference>
<dbReference type="PROSITE" id="PS50159">
    <property type="entry name" value="RIBOSOMAL_S13_2"/>
    <property type="match status" value="1"/>
</dbReference>
<comment type="function">
    <text evidence="1">Located at the top of the head of the 30S subunit, it contacts several helices of the 16S rRNA. In the 70S ribosome it contacts the 23S rRNA (bridge B1a) and protein L5 of the 50S subunit (bridge B1b), connecting the 2 subunits; these bridges are implicated in subunit movement. Contacts the tRNAs in the A and P-sites.</text>
</comment>
<comment type="subunit">
    <text evidence="1">Part of the 30S ribosomal subunit. Forms a loose heterodimer with protein S19. Forms two bridges to the 50S subunit in the 70S ribosome.</text>
</comment>
<comment type="similarity">
    <text evidence="1">Belongs to the universal ribosomal protein uS13 family.</text>
</comment>
<name>RS13_RHOP2</name>
<sequence length="122" mass="13844">MARIAGVNIPTNKRVLIALQYIHGIGQKNAAEIIEKVKIPVDRRVNQLSDAEVLQIREVIDRDYLVEGDLRRETGMNIKRLMDLGCYRGLRHRRGLPVRGQRTHTNARTRKGPAKAIAGKKK</sequence>
<feature type="chain" id="PRO_0000306695" description="Small ribosomal subunit protein uS13">
    <location>
        <begin position="1"/>
        <end position="122"/>
    </location>
</feature>
<feature type="region of interest" description="Disordered" evidence="2">
    <location>
        <begin position="99"/>
        <end position="122"/>
    </location>
</feature>
<accession>Q2IXN8</accession>
<protein>
    <recommendedName>
        <fullName evidence="1">Small ribosomal subunit protein uS13</fullName>
    </recommendedName>
    <alternativeName>
        <fullName evidence="3">30S ribosomal protein S13</fullName>
    </alternativeName>
</protein>
<reference key="1">
    <citation type="submission" date="2006-01" db="EMBL/GenBank/DDBJ databases">
        <title>Complete sequence of Rhodopseudomonas palustris HaA2.</title>
        <authorList>
            <consortium name="US DOE Joint Genome Institute"/>
            <person name="Copeland A."/>
            <person name="Lucas S."/>
            <person name="Lapidus A."/>
            <person name="Barry K."/>
            <person name="Detter J.C."/>
            <person name="Glavina T."/>
            <person name="Hammon N."/>
            <person name="Israni S."/>
            <person name="Pitluck S."/>
            <person name="Chain P."/>
            <person name="Malfatti S."/>
            <person name="Shin M."/>
            <person name="Vergez L."/>
            <person name="Schmutz J."/>
            <person name="Larimer F."/>
            <person name="Land M."/>
            <person name="Hauser L."/>
            <person name="Pelletier D.A."/>
            <person name="Kyrpides N."/>
            <person name="Anderson I."/>
            <person name="Oda Y."/>
            <person name="Harwood C.S."/>
            <person name="Richardson P."/>
        </authorList>
    </citation>
    <scope>NUCLEOTIDE SEQUENCE [LARGE SCALE GENOMIC DNA]</scope>
    <source>
        <strain>HaA2</strain>
    </source>
</reference>
<organism>
    <name type="scientific">Rhodopseudomonas palustris (strain HaA2)</name>
    <dbReference type="NCBI Taxonomy" id="316058"/>
    <lineage>
        <taxon>Bacteria</taxon>
        <taxon>Pseudomonadati</taxon>
        <taxon>Pseudomonadota</taxon>
        <taxon>Alphaproteobacteria</taxon>
        <taxon>Hyphomicrobiales</taxon>
        <taxon>Nitrobacteraceae</taxon>
        <taxon>Rhodopseudomonas</taxon>
    </lineage>
</organism>
<keyword id="KW-1185">Reference proteome</keyword>
<keyword id="KW-0687">Ribonucleoprotein</keyword>
<keyword id="KW-0689">Ribosomal protein</keyword>
<keyword id="KW-0694">RNA-binding</keyword>
<keyword id="KW-0699">rRNA-binding</keyword>
<keyword id="KW-0820">tRNA-binding</keyword>
<gene>
    <name evidence="1" type="primary">rpsM</name>
    <name type="ordered locus">RPB_2317</name>
</gene>
<evidence type="ECO:0000255" key="1">
    <source>
        <dbReference type="HAMAP-Rule" id="MF_01315"/>
    </source>
</evidence>
<evidence type="ECO:0000256" key="2">
    <source>
        <dbReference type="SAM" id="MobiDB-lite"/>
    </source>
</evidence>
<evidence type="ECO:0000305" key="3"/>
<proteinExistence type="inferred from homology"/>